<accession>Q96A72</accession>
<organism>
    <name type="scientific">Homo sapiens</name>
    <name type="common">Human</name>
    <dbReference type="NCBI Taxonomy" id="9606"/>
    <lineage>
        <taxon>Eukaryota</taxon>
        <taxon>Metazoa</taxon>
        <taxon>Chordata</taxon>
        <taxon>Craniata</taxon>
        <taxon>Vertebrata</taxon>
        <taxon>Euteleostomi</taxon>
        <taxon>Mammalia</taxon>
        <taxon>Eutheria</taxon>
        <taxon>Euarchontoglires</taxon>
        <taxon>Primates</taxon>
        <taxon>Haplorrhini</taxon>
        <taxon>Catarrhini</taxon>
        <taxon>Hominidae</taxon>
        <taxon>Homo</taxon>
    </lineage>
</organism>
<protein>
    <recommendedName>
        <fullName>Protein mago nashi homolog 2</fullName>
    </recommendedName>
</protein>
<evidence type="ECO:0000269" key="1">
    <source>
    </source>
</evidence>
<evidence type="ECO:0000269" key="2">
    <source>
    </source>
</evidence>
<evidence type="ECO:0000269" key="3">
    <source>
    </source>
</evidence>
<evidence type="ECO:0000269" key="4">
    <source>
    </source>
</evidence>
<evidence type="ECO:0000269" key="5">
    <source>
    </source>
</evidence>
<evidence type="ECO:0000269" key="6">
    <source ref="4"/>
</evidence>
<evidence type="ECO:0000305" key="7"/>
<evidence type="ECO:0007744" key="8">
    <source>
        <dbReference type="PDB" id="5XJC"/>
    </source>
</evidence>
<evidence type="ECO:0007744" key="9">
    <source>
        <dbReference type="PDB" id="5YZG"/>
    </source>
</evidence>
<evidence type="ECO:0007744" key="10">
    <source>
        <dbReference type="PDB" id="6QDV"/>
    </source>
</evidence>
<evidence type="ECO:0007744" key="11">
    <source>
    </source>
</evidence>
<evidence type="ECO:0007744" key="12">
    <source>
    </source>
</evidence>
<evidence type="ECO:0007744" key="13">
    <source>
    </source>
</evidence>
<evidence type="ECO:0007829" key="14">
    <source>
        <dbReference type="PDB" id="6ICZ"/>
    </source>
</evidence>
<reference key="1">
    <citation type="submission" date="1999-07" db="EMBL/GenBank/DDBJ databases">
        <title>Novel genes expressed in hematopoietic stem/progenitor cells from myelodysplastic syndrome patients.</title>
        <authorList>
            <person name="Gu J."/>
            <person name="Huang Q."/>
            <person name="Yu Y."/>
            <person name="Xu S."/>
            <person name="Wang Y."/>
            <person name="Han Z."/>
            <person name="Chen Z."/>
            <person name="Zhou J."/>
            <person name="Tu Y."/>
            <person name="Gu W."/>
            <person name="Fu G."/>
            <person name="Huang C."/>
        </authorList>
    </citation>
    <scope>NUCLEOTIDE SEQUENCE [LARGE SCALE MRNA]</scope>
    <source>
        <tissue>Hematopoietic stem cell</tissue>
    </source>
</reference>
<reference key="2">
    <citation type="journal article" date="2004" name="Nat. Genet.">
        <title>Complete sequencing and characterization of 21,243 full-length human cDNAs.</title>
        <authorList>
            <person name="Ota T."/>
            <person name="Suzuki Y."/>
            <person name="Nishikawa T."/>
            <person name="Otsuki T."/>
            <person name="Sugiyama T."/>
            <person name="Irie R."/>
            <person name="Wakamatsu A."/>
            <person name="Hayashi K."/>
            <person name="Sato H."/>
            <person name="Nagai K."/>
            <person name="Kimura K."/>
            <person name="Makita H."/>
            <person name="Sekine M."/>
            <person name="Obayashi M."/>
            <person name="Nishi T."/>
            <person name="Shibahara T."/>
            <person name="Tanaka T."/>
            <person name="Ishii S."/>
            <person name="Yamamoto J."/>
            <person name="Saito K."/>
            <person name="Kawai Y."/>
            <person name="Isono Y."/>
            <person name="Nakamura Y."/>
            <person name="Nagahari K."/>
            <person name="Murakami K."/>
            <person name="Yasuda T."/>
            <person name="Iwayanagi T."/>
            <person name="Wagatsuma M."/>
            <person name="Shiratori A."/>
            <person name="Sudo H."/>
            <person name="Hosoiri T."/>
            <person name="Kaku Y."/>
            <person name="Kodaira H."/>
            <person name="Kondo H."/>
            <person name="Sugawara M."/>
            <person name="Takahashi M."/>
            <person name="Kanda K."/>
            <person name="Yokoi T."/>
            <person name="Furuya T."/>
            <person name="Kikkawa E."/>
            <person name="Omura Y."/>
            <person name="Abe K."/>
            <person name="Kamihara K."/>
            <person name="Katsuta N."/>
            <person name="Sato K."/>
            <person name="Tanikawa M."/>
            <person name="Yamazaki M."/>
            <person name="Ninomiya K."/>
            <person name="Ishibashi T."/>
            <person name="Yamashita H."/>
            <person name="Murakawa K."/>
            <person name="Fujimori K."/>
            <person name="Tanai H."/>
            <person name="Kimata M."/>
            <person name="Watanabe M."/>
            <person name="Hiraoka S."/>
            <person name="Chiba Y."/>
            <person name="Ishida S."/>
            <person name="Ono Y."/>
            <person name="Takiguchi S."/>
            <person name="Watanabe S."/>
            <person name="Yosida M."/>
            <person name="Hotuta T."/>
            <person name="Kusano J."/>
            <person name="Kanehori K."/>
            <person name="Takahashi-Fujii A."/>
            <person name="Hara H."/>
            <person name="Tanase T.-O."/>
            <person name="Nomura Y."/>
            <person name="Togiya S."/>
            <person name="Komai F."/>
            <person name="Hara R."/>
            <person name="Takeuchi K."/>
            <person name="Arita M."/>
            <person name="Imose N."/>
            <person name="Musashino K."/>
            <person name="Yuuki H."/>
            <person name="Oshima A."/>
            <person name="Sasaki N."/>
            <person name="Aotsuka S."/>
            <person name="Yoshikawa Y."/>
            <person name="Matsunawa H."/>
            <person name="Ichihara T."/>
            <person name="Shiohata N."/>
            <person name="Sano S."/>
            <person name="Moriya S."/>
            <person name="Momiyama H."/>
            <person name="Satoh N."/>
            <person name="Takami S."/>
            <person name="Terashima Y."/>
            <person name="Suzuki O."/>
            <person name="Nakagawa S."/>
            <person name="Senoh A."/>
            <person name="Mizoguchi H."/>
            <person name="Goto Y."/>
            <person name="Shimizu F."/>
            <person name="Wakebe H."/>
            <person name="Hishigaki H."/>
            <person name="Watanabe T."/>
            <person name="Sugiyama A."/>
            <person name="Takemoto M."/>
            <person name="Kawakami B."/>
            <person name="Yamazaki M."/>
            <person name="Watanabe K."/>
            <person name="Kumagai A."/>
            <person name="Itakura S."/>
            <person name="Fukuzumi Y."/>
            <person name="Fujimori Y."/>
            <person name="Komiyama M."/>
            <person name="Tashiro H."/>
            <person name="Tanigami A."/>
            <person name="Fujiwara T."/>
            <person name="Ono T."/>
            <person name="Yamada K."/>
            <person name="Fujii Y."/>
            <person name="Ozaki K."/>
            <person name="Hirao M."/>
            <person name="Ohmori Y."/>
            <person name="Kawabata A."/>
            <person name="Hikiji T."/>
            <person name="Kobatake N."/>
            <person name="Inagaki H."/>
            <person name="Ikema Y."/>
            <person name="Okamoto S."/>
            <person name="Okitani R."/>
            <person name="Kawakami T."/>
            <person name="Noguchi S."/>
            <person name="Itoh T."/>
            <person name="Shigeta K."/>
            <person name="Senba T."/>
            <person name="Matsumura K."/>
            <person name="Nakajima Y."/>
            <person name="Mizuno T."/>
            <person name="Morinaga M."/>
            <person name="Sasaki M."/>
            <person name="Togashi T."/>
            <person name="Oyama M."/>
            <person name="Hata H."/>
            <person name="Watanabe M."/>
            <person name="Komatsu T."/>
            <person name="Mizushima-Sugano J."/>
            <person name="Satoh T."/>
            <person name="Shirai Y."/>
            <person name="Takahashi Y."/>
            <person name="Nakagawa K."/>
            <person name="Okumura K."/>
            <person name="Nagase T."/>
            <person name="Nomura N."/>
            <person name="Kikuchi H."/>
            <person name="Masuho Y."/>
            <person name="Yamashita R."/>
            <person name="Nakai K."/>
            <person name="Yada T."/>
            <person name="Nakamura Y."/>
            <person name="Ohara O."/>
            <person name="Isogai T."/>
            <person name="Sugano S."/>
        </authorList>
    </citation>
    <scope>NUCLEOTIDE SEQUENCE [LARGE SCALE MRNA]</scope>
</reference>
<reference key="3">
    <citation type="journal article" date="2004" name="Genome Res.">
        <title>The status, quality, and expansion of the NIH full-length cDNA project: the Mammalian Gene Collection (MGC).</title>
        <authorList>
            <consortium name="The MGC Project Team"/>
        </authorList>
    </citation>
    <scope>NUCLEOTIDE SEQUENCE [LARGE SCALE MRNA]</scope>
    <source>
        <tissue>Brain</tissue>
    </source>
</reference>
<reference key="4">
    <citation type="submission" date="2008-12" db="UniProtKB">
        <authorList>
            <person name="Bienvenut W.V."/>
            <person name="Lilla S."/>
            <person name="von Kriegsheim A."/>
            <person name="Lempens A."/>
            <person name="Kolch W."/>
        </authorList>
    </citation>
    <scope>PROTEIN SEQUENCE OF 2-10; 65-73 AND 106-116</scope>
    <scope>CLEAVAGE OF INITIATOR METHIONINE</scope>
    <scope>ACETYLATION AT ALA-2</scope>
    <scope>IDENTIFICATION BY MASS SPECTROMETRY</scope>
    <source>
        <tissue>Ovarian carcinoma</tissue>
    </source>
</reference>
<reference key="5">
    <citation type="journal article" date="2009" name="Anal. Chem.">
        <title>Lys-N and trypsin cover complementary parts of the phosphoproteome in a refined SCX-based approach.</title>
        <authorList>
            <person name="Gauci S."/>
            <person name="Helbig A.O."/>
            <person name="Slijper M."/>
            <person name="Krijgsveld J."/>
            <person name="Heck A.J."/>
            <person name="Mohammed S."/>
        </authorList>
    </citation>
    <scope>ACETYLATION [LARGE SCALE ANALYSIS] AT ALA-2</scope>
    <scope>CLEAVAGE OF INITIATOR METHIONINE [LARGE SCALE ANALYSIS]</scope>
    <scope>IDENTIFICATION BY MASS SPECTROMETRY [LARGE SCALE ANALYSIS]</scope>
</reference>
<reference key="6">
    <citation type="journal article" date="2012" name="Mol. Cell. Proteomics">
        <title>Comparative large-scale characterisation of plant vs. mammal proteins reveals similar and idiosyncratic N-alpha acetylation features.</title>
        <authorList>
            <person name="Bienvenut W.V."/>
            <person name="Sumpton D."/>
            <person name="Martinez A."/>
            <person name="Lilla S."/>
            <person name="Espagne C."/>
            <person name="Meinnel T."/>
            <person name="Giglione C."/>
        </authorList>
    </citation>
    <scope>ACETYLATION [LARGE SCALE ANALYSIS] AT ALA-2</scope>
    <scope>CLEAVAGE OF INITIATOR METHIONINE [LARGE SCALE ANALYSIS]</scope>
    <scope>IDENTIFICATION BY MASS SPECTROMETRY [LARGE SCALE ANALYSIS]</scope>
</reference>
<reference key="7">
    <citation type="journal article" date="2012" name="Proc. Natl. Acad. Sci. U.S.A.">
        <title>N-terminal acetylome analyses and functional insights of the N-terminal acetyltransferase NatB.</title>
        <authorList>
            <person name="Van Damme P."/>
            <person name="Lasa M."/>
            <person name="Polevoda B."/>
            <person name="Gazquez C."/>
            <person name="Elosegui-Artola A."/>
            <person name="Kim D.S."/>
            <person name="De Juan-Pardo E."/>
            <person name="Demeyer K."/>
            <person name="Hole K."/>
            <person name="Larrea E."/>
            <person name="Timmerman E."/>
            <person name="Prieto J."/>
            <person name="Arnesen T."/>
            <person name="Sherman F."/>
            <person name="Gevaert K."/>
            <person name="Aldabe R."/>
        </authorList>
    </citation>
    <scope>ACETYLATION [LARGE SCALE ANALYSIS] AT ALA-2</scope>
    <scope>CLEAVAGE OF INITIATOR METHIONINE [LARGE SCALE ANALYSIS]</scope>
    <scope>IDENTIFICATION BY MASS SPECTROMETRY [LARGE SCALE ANALYSIS]</scope>
</reference>
<reference key="8">
    <citation type="journal article" date="2013" name="RNA Biol.">
        <title>Two mammalian MAGOH genes contribute to exon junction complex composition and nonsense-mediated decay.</title>
        <authorList>
            <person name="Singh K.K."/>
            <person name="Wachsmuth L."/>
            <person name="Kulozik A.E."/>
            <person name="Gehring N.H."/>
        </authorList>
    </citation>
    <scope>FUNCTION</scope>
    <scope>SUBUNIT</scope>
    <scope>IDENTIFICATION IN THE EXON JUNCTION COMPLEX</scope>
</reference>
<reference evidence="8" key="9">
    <citation type="journal article" date="2017" name="Cell">
        <title>An Atomic Structure of the Human Spliceosome.</title>
        <authorList>
            <person name="Zhang X."/>
            <person name="Yan C."/>
            <person name="Hang J."/>
            <person name="Finci L.I."/>
            <person name="Lei J."/>
            <person name="Shi Y."/>
        </authorList>
    </citation>
    <scope>STRUCTURE BY ELECTRON MICROSCOPY (3.60 ANGSTROMS)</scope>
    <scope>FUNCTION</scope>
    <scope>SUBCELLULAR LOCATION</scope>
    <scope>SUBUNIT</scope>
</reference>
<reference evidence="9" key="10">
    <citation type="journal article" date="2018" name="Science">
        <title>Structure of a human catalytic step I spliceosome.</title>
        <authorList>
            <person name="Zhan X."/>
            <person name="Yan C."/>
            <person name="Zhang X."/>
            <person name="Lei J."/>
            <person name="Shi Y."/>
        </authorList>
    </citation>
    <scope>STRUCTURE BY ELECTRON MICROSCOPY (4.10 ANGSTROMS)</scope>
    <scope>FUNCTION</scope>
    <scope>SUBCELLULAR LOCATION</scope>
    <scope>SUBUNIT</scope>
</reference>
<reference evidence="10" key="11">
    <citation type="journal article" date="2019" name="Science">
        <title>A human postcatalytic spliceosome structure reveals essential roles of metazoan factors for exon ligation.</title>
        <authorList>
            <person name="Fica S.M."/>
            <person name="Oubridge C."/>
            <person name="Wilkinson M.E."/>
            <person name="Newman A.J."/>
            <person name="Nagai K."/>
        </authorList>
    </citation>
    <scope>STRUCTURE BY ELECTRON MICROSCOPY (3.30 ANGSTROMS) OF 5-145</scope>
    <scope>FUNCTION</scope>
    <scope>SUBCELLULAR LOCATION</scope>
    <scope>SUBUNIT</scope>
</reference>
<reference key="12">
    <citation type="journal article" date="2006" name="Science">
        <title>The consensus coding sequences of human breast and colorectal cancers.</title>
        <authorList>
            <person name="Sjoeblom T."/>
            <person name="Jones S."/>
            <person name="Wood L.D."/>
            <person name="Parsons D.W."/>
            <person name="Lin J."/>
            <person name="Barber T.D."/>
            <person name="Mandelker D."/>
            <person name="Leary R.J."/>
            <person name="Ptak J."/>
            <person name="Silliman N."/>
            <person name="Szabo S."/>
            <person name="Buckhaults P."/>
            <person name="Farrell C."/>
            <person name="Meeh P."/>
            <person name="Markowitz S.D."/>
            <person name="Willis J."/>
            <person name="Dawson D."/>
            <person name="Willson J.K.V."/>
            <person name="Gazdar A.F."/>
            <person name="Hartigan J."/>
            <person name="Wu L."/>
            <person name="Liu C."/>
            <person name="Parmigiani G."/>
            <person name="Park B.H."/>
            <person name="Bachman K.E."/>
            <person name="Papadopoulos N."/>
            <person name="Vogelstein B."/>
            <person name="Kinzler K.W."/>
            <person name="Velculescu V.E."/>
        </authorList>
    </citation>
    <scope>VARIANT [LARGE SCALE ANALYSIS] LYS-119</scope>
</reference>
<gene>
    <name type="primary">MAGOHB</name>
    <name type="synonym">MAGOH2</name>
</gene>
<sequence length="148" mass="17276">MAVASDFYLRYYVGHKGKFGHEFLEFEFRPDGKLRYANNSNYKNDVMIRKEAYVHKSVMEELKRIIDDSEITKEDDALWPPPDRVGRQELEIVIGDEHISFTTSKIGSLIDVNQSKDPEGLRVFYYLVQDLKCLVFSLIGLHFKIKPI</sequence>
<keyword id="KW-0002">3D-structure</keyword>
<keyword id="KW-0007">Acetylation</keyword>
<keyword id="KW-0903">Direct protein sequencing</keyword>
<keyword id="KW-0507">mRNA processing</keyword>
<keyword id="KW-0508">mRNA splicing</keyword>
<keyword id="KW-0509">mRNA transport</keyword>
<keyword id="KW-0539">Nucleus</keyword>
<keyword id="KW-1185">Reference proteome</keyword>
<keyword id="KW-0694">RNA-binding</keyword>
<keyword id="KW-0747">Spliceosome</keyword>
<keyword id="KW-0813">Transport</keyword>
<comment type="function">
    <text evidence="2 3 4 5">Required for pre-mRNA splicing as component of the spliceosome (PubMed:28502770, PubMed:29301961, PubMed:30705154). Plays a redundant role with MAGOH in the exon junction complex and in the nonsense-mediated decay (NMD) pathway (PubMed:23917022).</text>
</comment>
<comment type="subunit">
    <text evidence="2 3 4 5">Component of the pre-catalytic, catalytic and post-catalytic spliceosome complexes (PubMed:28502770, PubMed:29301961, PubMed:30705154). Heterodimer with RBM8A. Core component of the mRNA splicing-dependent exon junction complex (EJC); the core complex contains CASC3, EIF4A3, MAGOH or MAGOHB, and RBM8A (PubMed:23917022).</text>
</comment>
<comment type="interaction">
    <interactant intactId="EBI-746778">
        <id>Q96A72</id>
    </interactant>
    <interactant intactId="EBI-10173507">
        <id>Q6UY14-3</id>
        <label>ADAMTSL4</label>
    </interactant>
    <organismsDiffer>false</organismsDiffer>
    <experiments>3</experiments>
</comment>
<comment type="interaction">
    <interactant intactId="EBI-746778">
        <id>Q96A72</id>
    </interactant>
    <interactant intactId="EBI-746752">
        <id>Q9Y2J4</id>
        <label>AMOTL2</label>
    </interactant>
    <organismsDiffer>false</organismsDiffer>
    <experiments>4</experiments>
</comment>
<comment type="interaction">
    <interactant intactId="EBI-746778">
        <id>Q96A72</id>
    </interactant>
    <interactant intactId="EBI-10181188">
        <id>Q8N7W2-2</id>
        <label>BEND7</label>
    </interactant>
    <organismsDiffer>false</organismsDiffer>
    <experiments>3</experiments>
</comment>
<comment type="interaction">
    <interactant intactId="EBI-746778">
        <id>Q96A72</id>
    </interactant>
    <interactant intactId="EBI-739580">
        <id>Q13137</id>
        <label>CALCOCO2</label>
    </interactant>
    <organismsDiffer>false</organismsDiffer>
    <experiments>6</experiments>
</comment>
<comment type="interaction">
    <interactant intactId="EBI-746778">
        <id>Q96A72</id>
    </interactant>
    <interactant intactId="EBI-3866279">
        <id>Q9BWT7</id>
        <label>CARD10</label>
    </interactant>
    <organismsDiffer>false</organismsDiffer>
    <experiments>3</experiments>
</comment>
<comment type="interaction">
    <interactant intactId="EBI-746778">
        <id>Q96A72</id>
    </interactant>
    <interactant intactId="EBI-10171570">
        <id>Q68D86</id>
        <label>CCDC102B</label>
    </interactant>
    <organismsDiffer>false</organismsDiffer>
    <experiments>6</experiments>
</comment>
<comment type="interaction">
    <interactant intactId="EBI-746778">
        <id>Q96A72</id>
    </interactant>
    <interactant intactId="EBI-711501">
        <id>Q9BWC9</id>
        <label>CCDC106</label>
    </interactant>
    <organismsDiffer>false</organismsDiffer>
    <experiments>3</experiments>
</comment>
<comment type="interaction">
    <interactant intactId="EBI-746778">
        <id>Q96A72</id>
    </interactant>
    <interactant intactId="EBI-739789">
        <id>Q92997</id>
        <label>DVL3</label>
    </interactant>
    <organismsDiffer>false</organismsDiffer>
    <experiments>3</experiments>
</comment>
<comment type="interaction">
    <interactant intactId="EBI-746778">
        <id>Q96A72</id>
    </interactant>
    <interactant intactId="EBI-2349927">
        <id>Q5JST6</id>
        <label>EFHC2</label>
    </interactant>
    <organismsDiffer>false</organismsDiffer>
    <experiments>3</experiments>
</comment>
<comment type="interaction">
    <interactant intactId="EBI-746778">
        <id>Q96A72</id>
    </interactant>
    <interactant intactId="EBI-750641">
        <id>Q5TD97</id>
        <label>FHL5</label>
    </interactant>
    <organismsDiffer>false</organismsDiffer>
    <experiments>3</experiments>
</comment>
<comment type="interaction">
    <interactant intactId="EBI-746778">
        <id>Q96A72</id>
    </interactant>
    <interactant intactId="EBI-11022345">
        <id>P51114-2</id>
        <label>FXR1</label>
    </interactant>
    <organismsDiffer>false</organismsDiffer>
    <experiments>3</experiments>
</comment>
<comment type="interaction">
    <interactant intactId="EBI-746778">
        <id>Q96A72</id>
    </interactant>
    <interactant intactId="EBI-12197555">
        <id>Q8TDQ7-2</id>
        <label>GNPDA2</label>
    </interactant>
    <organismsDiffer>false</organismsDiffer>
    <experiments>3</experiments>
</comment>
<comment type="interaction">
    <interactant intactId="EBI-746778">
        <id>Q96A72</id>
    </interactant>
    <interactant intactId="EBI-618309">
        <id>Q08379</id>
        <label>GOLGA2</label>
    </interactant>
    <organismsDiffer>false</organismsDiffer>
    <experiments>6</experiments>
</comment>
<comment type="interaction">
    <interactant intactId="EBI-746778">
        <id>Q96A72</id>
    </interactant>
    <interactant intactId="EBI-751540">
        <id>O95872</id>
        <label>GPANK1</label>
    </interactant>
    <organismsDiffer>false</organismsDiffer>
    <experiments>3</experiments>
</comment>
<comment type="interaction">
    <interactant intactId="EBI-746778">
        <id>Q96A72</id>
    </interactant>
    <interactant intactId="EBI-740641">
        <id>Q9NP66</id>
        <label>HMG20A</label>
    </interactant>
    <organismsDiffer>false</organismsDiffer>
    <experiments>4</experiments>
</comment>
<comment type="interaction">
    <interactant intactId="EBI-746778">
        <id>Q96A72</id>
    </interactant>
    <interactant intactId="EBI-7116203">
        <id>O75031</id>
        <label>HSF2BP</label>
    </interactant>
    <organismsDiffer>false</organismsDiffer>
    <experiments>3</experiments>
</comment>
<comment type="interaction">
    <interactant intactId="EBI-746778">
        <id>Q96A72</id>
    </interactant>
    <interactant intactId="EBI-8638439">
        <id>Q8IYA8</id>
        <label>IHO1</label>
    </interactant>
    <organismsDiffer>false</organismsDiffer>
    <experiments>3</experiments>
</comment>
<comment type="interaction">
    <interactant intactId="EBI-746778">
        <id>Q96A72</id>
    </interactant>
    <interactant intactId="EBI-11522367">
        <id>Q13422-7</id>
        <label>IKZF1</label>
    </interactant>
    <organismsDiffer>false</organismsDiffer>
    <experiments>3</experiments>
</comment>
<comment type="interaction">
    <interactant intactId="EBI-746778">
        <id>Q96A72</id>
    </interactant>
    <interactant intactId="EBI-747204">
        <id>Q9UKT9</id>
        <label>IKZF3</label>
    </interactant>
    <organismsDiffer>false</organismsDiffer>
    <experiments>7</experiments>
</comment>
<comment type="interaction">
    <interactant intactId="EBI-746778">
        <id>Q96A72</id>
    </interactant>
    <interactant intactId="EBI-6509505">
        <id>Q0VD86</id>
        <label>INCA1</label>
    </interactant>
    <organismsDiffer>false</organismsDiffer>
    <experiments>3</experiments>
</comment>
<comment type="interaction">
    <interactant intactId="EBI-746778">
        <id>Q96A72</id>
    </interactant>
    <interactant intactId="EBI-10171697">
        <id>Q6A162</id>
        <label>KRT40</label>
    </interactant>
    <organismsDiffer>false</organismsDiffer>
    <experiments>3</experiments>
</comment>
<comment type="interaction">
    <interactant intactId="EBI-746778">
        <id>Q96A72</id>
    </interactant>
    <interactant intactId="EBI-2949715">
        <id>O95678</id>
        <label>KRT75</label>
    </interactant>
    <organismsDiffer>false</organismsDiffer>
    <experiments>3</experiments>
</comment>
<comment type="interaction">
    <interactant intactId="EBI-746778">
        <id>Q96A72</id>
    </interactant>
    <interactant intactId="EBI-11959885">
        <id>Q07627</id>
        <label>KRTAP1-1</label>
    </interactant>
    <organismsDiffer>false</organismsDiffer>
    <experiments>3</experiments>
</comment>
<comment type="interaction">
    <interactant intactId="EBI-746778">
        <id>Q96A72</id>
    </interactant>
    <interactant intactId="EBI-11953846">
        <id>Q52LG2</id>
        <label>KRTAP13-2</label>
    </interactant>
    <organismsDiffer>false</organismsDiffer>
    <experiments>3</experiments>
</comment>
<comment type="interaction">
    <interactant intactId="EBI-746778">
        <id>Q96A72</id>
    </interactant>
    <interactant intactId="EBI-749878">
        <id>Q8IYD9</id>
        <label>LAS2</label>
    </interactant>
    <organismsDiffer>false</organismsDiffer>
    <experiments>3</experiments>
</comment>
<comment type="interaction">
    <interactant intactId="EBI-746778">
        <id>Q96A72</id>
    </interactant>
    <interactant intactId="EBI-10172526">
        <id>Q9UJV3-2</id>
        <label>MID2</label>
    </interactant>
    <organismsDiffer>false</organismsDiffer>
    <experiments>3</experiments>
</comment>
<comment type="interaction">
    <interactant intactId="EBI-746778">
        <id>Q96A72</id>
    </interactant>
    <interactant intactId="EBI-1246238">
        <id>P17568</id>
        <label>NDUFB7</label>
    </interactant>
    <organismsDiffer>false</organismsDiffer>
    <experiments>3</experiments>
</comment>
<comment type="interaction">
    <interactant intactId="EBI-746778">
        <id>Q96A72</id>
    </interactant>
    <interactant intactId="EBI-295391">
        <id>Q9BYG5</id>
        <label>PARD6B</label>
    </interactant>
    <organismsDiffer>false</organismsDiffer>
    <experiments>3</experiments>
</comment>
<comment type="interaction">
    <interactant intactId="EBI-746778">
        <id>Q96A72</id>
    </interactant>
    <interactant intactId="EBI-12859446">
        <id>P23759-2</id>
        <label>PAX7</label>
    </interactant>
    <organismsDiffer>false</organismsDiffer>
    <experiments>3</experiments>
</comment>
<comment type="interaction">
    <interactant intactId="EBI-746778">
        <id>Q96A72</id>
    </interactant>
    <interactant intactId="EBI-10302990">
        <id>Q9BYU1</id>
        <label>PBX4</label>
    </interactant>
    <organismsDiffer>false</organismsDiffer>
    <experiments>3</experiments>
</comment>
<comment type="interaction">
    <interactant intactId="EBI-746778">
        <id>Q96A72</id>
    </interactant>
    <interactant intactId="EBI-10987518">
        <id>Q99959-2</id>
        <label>PKP2</label>
    </interactant>
    <organismsDiffer>false</organismsDiffer>
    <experiments>3</experiments>
</comment>
<comment type="interaction">
    <interactant intactId="EBI-746778">
        <id>Q96A72</id>
    </interactant>
    <interactant intactId="EBI-752074">
        <id>P41219</id>
        <label>PRPH</label>
    </interactant>
    <organismsDiffer>false</organismsDiffer>
    <experiments>3</experiments>
</comment>
<comment type="interaction">
    <interactant intactId="EBI-746778">
        <id>Q96A72</id>
    </interactant>
    <interactant intactId="EBI-724449">
        <id>Q14558</id>
        <label>PRPSAP1</label>
    </interactant>
    <organismsDiffer>false</organismsDiffer>
    <experiments>3</experiments>
</comment>
<comment type="interaction">
    <interactant intactId="EBI-746778">
        <id>Q96A72</id>
    </interactant>
    <interactant intactId="EBI-2860264">
        <id>Q16825</id>
        <label>PTPN21</label>
    </interactant>
    <organismsDiffer>false</organismsDiffer>
    <experiments>3</experiments>
</comment>
<comment type="interaction">
    <interactant intactId="EBI-746778">
        <id>Q96A72</id>
    </interactant>
    <interactant intactId="EBI-1210429">
        <id>Q9NYW8</id>
        <label>RBAK</label>
    </interactant>
    <organismsDiffer>false</organismsDiffer>
    <experiments>3</experiments>
</comment>
<comment type="interaction">
    <interactant intactId="EBI-746778">
        <id>Q96A72</id>
    </interactant>
    <interactant intactId="EBI-447231">
        <id>Q9Y5S9</id>
        <label>RBM8A</label>
    </interactant>
    <organismsDiffer>false</organismsDiffer>
    <experiments>13</experiments>
</comment>
<comment type="interaction">
    <interactant intactId="EBI-746778">
        <id>Q96A72</id>
    </interactant>
    <interactant intactId="EBI-743526">
        <id>P38159</id>
        <label>RBMX</label>
    </interactant>
    <organismsDiffer>false</organismsDiffer>
    <experiments>3</experiments>
</comment>
<comment type="interaction">
    <interactant intactId="EBI-746778">
        <id>Q96A72</id>
    </interactant>
    <interactant intactId="EBI-307352">
        <id>Q04864</id>
        <label>REL</label>
    </interactant>
    <organismsDiffer>false</organismsDiffer>
    <experiments>3</experiments>
</comment>
<comment type="interaction">
    <interactant intactId="EBI-746778">
        <id>Q96A72</id>
    </interactant>
    <interactant intactId="EBI-10829018">
        <id>Q04864-2</id>
        <label>REL</label>
    </interactant>
    <organismsDiffer>false</organismsDiffer>
    <experiments>3</experiments>
</comment>
<comment type="interaction">
    <interactant intactId="EBI-746778">
        <id>Q96A72</id>
    </interactant>
    <interactant intactId="EBI-747225">
        <id>Q59EK9</id>
        <label>RUNDC3A</label>
    </interactant>
    <organismsDiffer>false</organismsDiffer>
    <experiments>3</experiments>
</comment>
<comment type="interaction">
    <interactant intactId="EBI-746778">
        <id>Q96A72</id>
    </interactant>
    <interactant intactId="EBI-632715">
        <id>Q13573</id>
        <label>SNW1</label>
    </interactant>
    <organismsDiffer>false</organismsDiffer>
    <experiments>3</experiments>
</comment>
<comment type="interaction">
    <interactant intactId="EBI-746778">
        <id>Q96A72</id>
    </interactant>
    <interactant intactId="EBI-17860101">
        <id>Q9NWH7-2</id>
        <label>SPATA6</label>
    </interactant>
    <organismsDiffer>false</organismsDiffer>
    <experiments>3</experiments>
</comment>
<comment type="interaction">
    <interactant intactId="EBI-746778">
        <id>Q96A72</id>
    </interactant>
    <interactant intactId="EBI-12047907">
        <id>A6NLX3</id>
        <label>SPDYE4</label>
    </interactant>
    <organismsDiffer>false</organismsDiffer>
    <experiments>5</experiments>
</comment>
<comment type="interaction">
    <interactant intactId="EBI-746778">
        <id>Q96A72</id>
    </interactant>
    <interactant intactId="EBI-714135">
        <id>O75558</id>
        <label>STX11</label>
    </interactant>
    <organismsDiffer>false</organismsDiffer>
    <experiments>3</experiments>
</comment>
<comment type="interaction">
    <interactant intactId="EBI-746778">
        <id>Q96A72</id>
    </interactant>
    <interactant intactId="EBI-742268">
        <id>O75478</id>
        <label>TADA2A</label>
    </interactant>
    <organismsDiffer>false</organismsDiffer>
    <experiments>3</experiments>
</comment>
<comment type="interaction">
    <interactant intactId="EBI-746778">
        <id>Q96A72</id>
    </interactant>
    <interactant intactId="EBI-533224">
        <id>P15884</id>
        <label>TCF4</label>
    </interactant>
    <organismsDiffer>false</organismsDiffer>
    <experiments>3</experiments>
</comment>
<comment type="interaction">
    <interactant intactId="EBI-746778">
        <id>Q96A72</id>
    </interactant>
    <interactant intactId="EBI-750109">
        <id>Q9NYB0</id>
        <label>TERF2IP</label>
    </interactant>
    <organismsDiffer>false</organismsDiffer>
    <experiments>2</experiments>
</comment>
<comment type="interaction">
    <interactant intactId="EBI-746778">
        <id>Q96A72</id>
    </interactant>
    <interactant intactId="EBI-741350">
        <id>Q9BT49</id>
        <label>THAP7</label>
    </interactant>
    <organismsDiffer>false</organismsDiffer>
    <experiments>3</experiments>
</comment>
<comment type="interaction">
    <interactant intactId="EBI-746778">
        <id>Q96A72</id>
    </interactant>
    <interactant intactId="EBI-717810">
        <id>Q08117</id>
        <label>TLE5</label>
    </interactant>
    <organismsDiffer>false</organismsDiffer>
    <experiments>3</experiments>
</comment>
<comment type="interaction">
    <interactant intactId="EBI-746778">
        <id>Q96A72</id>
    </interactant>
    <interactant intactId="EBI-11741437">
        <id>Q08117-2</id>
        <label>TLE5</label>
    </interactant>
    <organismsDiffer>false</organismsDiffer>
    <experiments>3</experiments>
</comment>
<comment type="interaction">
    <interactant intactId="EBI-746778">
        <id>Q96A72</id>
    </interactant>
    <interactant intactId="EBI-2685506">
        <id>Q13595</id>
        <label>TRA2A</label>
    </interactant>
    <organismsDiffer>false</organismsDiffer>
    <experiments>3</experiments>
</comment>
<comment type="interaction">
    <interactant intactId="EBI-746778">
        <id>Q96A72</id>
    </interactant>
    <interactant intactId="EBI-725485">
        <id>P62995</id>
        <label>TRA2B</label>
    </interactant>
    <organismsDiffer>false</organismsDiffer>
    <experiments>3</experiments>
</comment>
<comment type="interaction">
    <interactant intactId="EBI-746778">
        <id>Q96A72</id>
    </interactant>
    <interactant intactId="EBI-719493">
        <id>P14373</id>
        <label>TRIM27</label>
    </interactant>
    <organismsDiffer>false</organismsDiffer>
    <experiments>3</experiments>
</comment>
<comment type="interaction">
    <interactant intactId="EBI-746778">
        <id>Q96A72</id>
    </interactant>
    <interactant intactId="EBI-5235829">
        <id>Q8IWZ5</id>
        <label>TRIM42</label>
    </interactant>
    <organismsDiffer>false</organismsDiffer>
    <experiments>3</experiments>
</comment>
<comment type="interaction">
    <interactant intactId="EBI-746778">
        <id>Q96A72</id>
    </interactant>
    <interactant intactId="EBI-12017160">
        <id>Q96DT7-3</id>
        <label>ZBTB10</label>
    </interactant>
    <organismsDiffer>false</organismsDiffer>
    <experiments>3</experiments>
</comment>
<comment type="interaction">
    <interactant intactId="EBI-746778">
        <id>Q96A72</id>
    </interactant>
    <interactant intactId="EBI-12287587">
        <id>B2RXF5</id>
        <label>ZBTB42</label>
    </interactant>
    <organismsDiffer>false</organismsDiffer>
    <experiments>3</experiments>
</comment>
<comment type="interaction">
    <interactant intactId="EBI-746778">
        <id>Q96A72</id>
    </interactant>
    <interactant intactId="EBI-6381556">
        <id>Q9HCL3</id>
        <label>ZFP14</label>
    </interactant>
    <organismsDiffer>false</organismsDiffer>
    <experiments>3</experiments>
</comment>
<comment type="interaction">
    <interactant intactId="EBI-746778">
        <id>Q96A72</id>
    </interactant>
    <interactant intactId="EBI-4401611">
        <id>Q9HBF4</id>
        <label>ZFYVE1</label>
    </interactant>
    <organismsDiffer>false</organismsDiffer>
    <experiments>3</experiments>
</comment>
<comment type="interaction">
    <interactant intactId="EBI-746778">
        <id>Q96A72</id>
    </interactant>
    <interactant intactId="EBI-12884200">
        <id>P17023</id>
        <label>ZNF19</label>
    </interactant>
    <organismsDiffer>false</organismsDiffer>
    <experiments>3</experiments>
</comment>
<comment type="interaction">
    <interactant intactId="EBI-746778">
        <id>Q96A72</id>
    </interactant>
    <interactant intactId="EBI-10177272">
        <id>P15622-3</id>
        <label>ZNF250</label>
    </interactant>
    <organismsDiffer>false</organismsDiffer>
    <experiments>3</experiments>
</comment>
<comment type="interaction">
    <interactant intactId="EBI-746778">
        <id>Q96A72</id>
    </interactant>
    <interactant intactId="EBI-8643207">
        <id>Q8TD17</id>
        <label>ZNF398</label>
    </interactant>
    <organismsDiffer>false</organismsDiffer>
    <experiments>6</experiments>
</comment>
<comment type="interaction">
    <interactant intactId="EBI-746778">
        <id>Q96A72</id>
    </interactant>
    <interactant intactId="EBI-743265">
        <id>Q9BUY5</id>
        <label>ZNF426</label>
    </interactant>
    <organismsDiffer>false</organismsDiffer>
    <experiments>4</experiments>
</comment>
<comment type="interaction">
    <interactant intactId="EBI-746778">
        <id>Q96A72</id>
    </interactant>
    <interactant intactId="EBI-11962468">
        <id>Q7Z4V0</id>
        <label>ZNF438</label>
    </interactant>
    <organismsDiffer>false</organismsDiffer>
    <experiments>3</experiments>
</comment>
<comment type="interaction">
    <interactant intactId="EBI-746778">
        <id>Q96A72</id>
    </interactant>
    <interactant intactId="EBI-740232">
        <id>Q9NWS9-2</id>
        <label>ZNF446</label>
    </interactant>
    <organismsDiffer>false</organismsDiffer>
    <experiments>3</experiments>
</comment>
<comment type="interaction">
    <interactant intactId="EBI-746778">
        <id>Q96A72</id>
    </interactant>
    <interactant intactId="EBI-10215956">
        <id>Q6P9G9</id>
        <label>ZNF449</label>
    </interactant>
    <organismsDiffer>false</organismsDiffer>
    <experiments>3</experiments>
</comment>
<comment type="interaction">
    <interactant intactId="EBI-746778">
        <id>Q96A72</id>
    </interactant>
    <interactant intactId="EBI-12895421">
        <id>Q8IVP9</id>
        <label>ZNF547</label>
    </interactant>
    <organismsDiffer>false</organismsDiffer>
    <experiments>3</experiments>
</comment>
<comment type="interaction">
    <interactant intactId="EBI-746778">
        <id>Q96A72</id>
    </interactant>
    <interactant intactId="EBI-2555762">
        <id>Q969W8</id>
        <label>ZNF566</label>
    </interactant>
    <organismsDiffer>false</organismsDiffer>
    <experiments>3</experiments>
</comment>
<comment type="interaction">
    <interactant intactId="EBI-746778">
        <id>Q96A72</id>
    </interactant>
    <interactant intactId="EBI-8490788">
        <id>Q68EA5</id>
        <label>ZNF57</label>
    </interactant>
    <organismsDiffer>false</organismsDiffer>
    <experiments>3</experiments>
</comment>
<comment type="interaction">
    <interactant intactId="EBI-746778">
        <id>Q96A72</id>
    </interactant>
    <interactant intactId="EBI-4395669">
        <id>Q6ZNG0</id>
        <label>ZNF620</label>
    </interactant>
    <organismsDiffer>false</organismsDiffer>
    <experiments>3</experiments>
</comment>
<comment type="interaction">
    <interactant intactId="EBI-746778">
        <id>Q96A72</id>
    </interactant>
    <interactant intactId="EBI-10251462">
        <id>Q6NX45</id>
        <label>ZNF774</label>
    </interactant>
    <organismsDiffer>false</organismsDiffer>
    <experiments>3</experiments>
</comment>
<comment type="interaction">
    <interactant intactId="EBI-746778">
        <id>Q96A72</id>
    </interactant>
    <interactant intactId="EBI-5667516">
        <id>Q9Y2P0</id>
        <label>ZNF835</label>
    </interactant>
    <organismsDiffer>false</organismsDiffer>
    <experiments>3</experiments>
</comment>
<comment type="subcellular location">
    <subcellularLocation>
        <location evidence="3 4 5">Nucleus</location>
    </subcellularLocation>
</comment>
<comment type="tissue specificity">
    <text>Ubiquitous.</text>
</comment>
<comment type="similarity">
    <text evidence="7">Belongs to the mago nashi family.</text>
</comment>
<proteinExistence type="evidence at protein level"/>
<name>MGN2_HUMAN</name>
<dbReference type="EMBL" id="AF165518">
    <property type="protein sequence ID" value="AAF86648.1"/>
    <property type="molecule type" value="mRNA"/>
</dbReference>
<dbReference type="EMBL" id="AK001154">
    <property type="protein sequence ID" value="BAA91522.1"/>
    <property type="molecule type" value="mRNA"/>
</dbReference>
<dbReference type="EMBL" id="AK022720">
    <property type="protein sequence ID" value="BAB14202.1"/>
    <property type="molecule type" value="mRNA"/>
</dbReference>
<dbReference type="EMBL" id="BC010905">
    <property type="protein sequence ID" value="AAH10905.1"/>
    <property type="molecule type" value="mRNA"/>
</dbReference>
<dbReference type="CCDS" id="CCDS8628.1"/>
<dbReference type="RefSeq" id="NP_001306914.1">
    <property type="nucleotide sequence ID" value="NM_001319985.1"/>
</dbReference>
<dbReference type="RefSeq" id="NP_060518.1">
    <property type="nucleotide sequence ID" value="NM_018048.5"/>
</dbReference>
<dbReference type="PDB" id="5XJC">
    <property type="method" value="EM"/>
    <property type="resolution" value="3.60 A"/>
    <property type="chains" value="v=1-148"/>
</dbReference>
<dbReference type="PDB" id="5YZG">
    <property type="method" value="EM"/>
    <property type="resolution" value="4.10 A"/>
    <property type="chains" value="v=1-148"/>
</dbReference>
<dbReference type="PDB" id="6ICZ">
    <property type="method" value="EM"/>
    <property type="resolution" value="3.00 A"/>
    <property type="chains" value="v=1-148"/>
</dbReference>
<dbReference type="PDB" id="6QDV">
    <property type="method" value="EM"/>
    <property type="resolution" value="3.30 A"/>
    <property type="chains" value="9=5-145"/>
</dbReference>
<dbReference type="PDBsum" id="5XJC"/>
<dbReference type="PDBsum" id="5YZG"/>
<dbReference type="PDBsum" id="6ICZ"/>
<dbReference type="PDBsum" id="6QDV"/>
<dbReference type="EMDB" id="EMD-4525"/>
<dbReference type="EMDB" id="EMD-6721"/>
<dbReference type="EMDB" id="EMD-6864"/>
<dbReference type="EMDB" id="EMD-9645"/>
<dbReference type="SMR" id="Q96A72"/>
<dbReference type="BioGRID" id="120420">
    <property type="interactions" value="166"/>
</dbReference>
<dbReference type="ComplexPortal" id="CPX-680">
    <property type="entry name" value="Exon junction subcomplex MAGOHB-Y14"/>
</dbReference>
<dbReference type="ComplexPortal" id="CPX-682">
    <property type="entry name" value="Exon junction core complex, MAGOHB variant"/>
</dbReference>
<dbReference type="FunCoup" id="Q96A72">
    <property type="interactions" value="3437"/>
</dbReference>
<dbReference type="IntAct" id="Q96A72">
    <property type="interactions" value="107"/>
</dbReference>
<dbReference type="MINT" id="Q96A72"/>
<dbReference type="STRING" id="9606.ENSP00000319240"/>
<dbReference type="GlyGen" id="Q96A72">
    <property type="glycosylation" value="1 site, 1 O-linked glycan (1 site)"/>
</dbReference>
<dbReference type="iPTMnet" id="Q96A72"/>
<dbReference type="PhosphoSitePlus" id="Q96A72"/>
<dbReference type="SwissPalm" id="Q96A72"/>
<dbReference type="BioMuta" id="MAGOHB"/>
<dbReference type="DMDM" id="74731095"/>
<dbReference type="jPOST" id="Q96A72"/>
<dbReference type="MassIVE" id="Q96A72"/>
<dbReference type="PaxDb" id="9606-ENSP00000319240"/>
<dbReference type="PeptideAtlas" id="Q96A72"/>
<dbReference type="ProteomicsDB" id="75929"/>
<dbReference type="Pumba" id="Q96A72"/>
<dbReference type="TopDownProteomics" id="Q96A72"/>
<dbReference type="Antibodypedia" id="23361">
    <property type="antibodies" value="65 antibodies from 15 providers"/>
</dbReference>
<dbReference type="DNASU" id="55110"/>
<dbReference type="Ensembl" id="ENST00000320756.7">
    <property type="protein sequence ID" value="ENSP00000319240.2"/>
    <property type="gene ID" value="ENSG00000111196.11"/>
</dbReference>
<dbReference type="GeneID" id="55110"/>
<dbReference type="KEGG" id="hsa:55110"/>
<dbReference type="MANE-Select" id="ENST00000320756.7">
    <property type="protein sequence ID" value="ENSP00000319240.2"/>
    <property type="RefSeq nucleotide sequence ID" value="NM_018048.5"/>
    <property type="RefSeq protein sequence ID" value="NP_060518.1"/>
</dbReference>
<dbReference type="UCSC" id="uc001qyq.3">
    <property type="organism name" value="human"/>
</dbReference>
<dbReference type="AGR" id="HGNC:25504"/>
<dbReference type="CTD" id="55110"/>
<dbReference type="GeneCards" id="MAGOHB"/>
<dbReference type="HGNC" id="HGNC:25504">
    <property type="gene designation" value="MAGOHB"/>
</dbReference>
<dbReference type="HPA" id="ENSG00000111196">
    <property type="expression patterns" value="Low tissue specificity"/>
</dbReference>
<dbReference type="MIM" id="619552">
    <property type="type" value="gene"/>
</dbReference>
<dbReference type="neXtProt" id="NX_Q96A72"/>
<dbReference type="OpenTargets" id="ENSG00000111196"/>
<dbReference type="PharmGKB" id="PA162394899"/>
<dbReference type="VEuPathDB" id="HostDB:ENSG00000111196"/>
<dbReference type="eggNOG" id="KOG3392">
    <property type="taxonomic scope" value="Eukaryota"/>
</dbReference>
<dbReference type="GeneTree" id="ENSGT00390000003156"/>
<dbReference type="HOGENOM" id="CLU_109497_1_1_1"/>
<dbReference type="InParanoid" id="Q96A72"/>
<dbReference type="OMA" id="IRKEMWI"/>
<dbReference type="OrthoDB" id="9509555at2759"/>
<dbReference type="PAN-GO" id="Q96A72">
    <property type="GO annotations" value="3 GO annotations based on evolutionary models"/>
</dbReference>
<dbReference type="PhylomeDB" id="Q96A72"/>
<dbReference type="TreeFam" id="TF300128"/>
<dbReference type="PathwayCommons" id="Q96A72"/>
<dbReference type="Reactome" id="R-HSA-159236">
    <property type="pathway name" value="Transport of Mature mRNA derived from an Intron-Containing Transcript"/>
</dbReference>
<dbReference type="Reactome" id="R-HSA-72163">
    <property type="pathway name" value="mRNA Splicing - Major Pathway"/>
</dbReference>
<dbReference type="Reactome" id="R-HSA-72187">
    <property type="pathway name" value="mRNA 3'-end processing"/>
</dbReference>
<dbReference type="Reactome" id="R-HSA-73856">
    <property type="pathway name" value="RNA Polymerase II Transcription Termination"/>
</dbReference>
<dbReference type="Reactome" id="R-HSA-9010553">
    <property type="pathway name" value="Regulation of expression of SLITs and ROBOs"/>
</dbReference>
<dbReference type="Reactome" id="R-HSA-975957">
    <property type="pathway name" value="Nonsense Mediated Decay (NMD) enhanced by the Exon Junction Complex (EJC)"/>
</dbReference>
<dbReference type="SignaLink" id="Q96A72"/>
<dbReference type="BioGRID-ORCS" id="55110">
    <property type="hits" value="46 hits in 1157 CRISPR screens"/>
</dbReference>
<dbReference type="CD-CODE" id="232F8A39">
    <property type="entry name" value="P-body"/>
</dbReference>
<dbReference type="CD-CODE" id="DEE660B4">
    <property type="entry name" value="Stress granule"/>
</dbReference>
<dbReference type="ChiTaRS" id="MAGOHB">
    <property type="organism name" value="human"/>
</dbReference>
<dbReference type="GenomeRNAi" id="55110"/>
<dbReference type="Pharos" id="Q96A72">
    <property type="development level" value="Tbio"/>
</dbReference>
<dbReference type="PRO" id="PR:Q96A72"/>
<dbReference type="Proteomes" id="UP000005640">
    <property type="component" value="Chromosome 12"/>
</dbReference>
<dbReference type="RNAct" id="Q96A72">
    <property type="molecule type" value="protein"/>
</dbReference>
<dbReference type="Bgee" id="ENSG00000111196">
    <property type="expression patterns" value="Expressed in calcaneal tendon and 134 other cell types or tissues"/>
</dbReference>
<dbReference type="ExpressionAtlas" id="Q96A72">
    <property type="expression patterns" value="baseline and differential"/>
</dbReference>
<dbReference type="GO" id="GO:0071013">
    <property type="term" value="C:catalytic step 2 spliceosome"/>
    <property type="evidence" value="ECO:0000318"/>
    <property type="project" value="GO_Central"/>
</dbReference>
<dbReference type="GO" id="GO:0005829">
    <property type="term" value="C:cytosol"/>
    <property type="evidence" value="ECO:0000303"/>
    <property type="project" value="ComplexPortal"/>
</dbReference>
<dbReference type="GO" id="GO:0035145">
    <property type="term" value="C:exon-exon junction complex"/>
    <property type="evidence" value="ECO:0000314"/>
    <property type="project" value="HGNC"/>
</dbReference>
<dbReference type="GO" id="GO:1990501">
    <property type="term" value="C:exon-exon junction subcomplex mago-y14"/>
    <property type="evidence" value="ECO:0000353"/>
    <property type="project" value="ComplexPortal"/>
</dbReference>
<dbReference type="GO" id="GO:0043025">
    <property type="term" value="C:neuronal cell body"/>
    <property type="evidence" value="ECO:0007669"/>
    <property type="project" value="Ensembl"/>
</dbReference>
<dbReference type="GO" id="GO:0005654">
    <property type="term" value="C:nucleoplasm"/>
    <property type="evidence" value="ECO:0000304"/>
    <property type="project" value="Reactome"/>
</dbReference>
<dbReference type="GO" id="GO:0005634">
    <property type="term" value="C:nucleus"/>
    <property type="evidence" value="ECO:0000314"/>
    <property type="project" value="UniProtKB"/>
</dbReference>
<dbReference type="GO" id="GO:0071006">
    <property type="term" value="C:U2-type catalytic step 1 spliceosome"/>
    <property type="evidence" value="ECO:0000314"/>
    <property type="project" value="UniProtKB"/>
</dbReference>
<dbReference type="GO" id="GO:0071005">
    <property type="term" value="C:U2-type precatalytic spliceosome"/>
    <property type="evidence" value="ECO:0000314"/>
    <property type="project" value="UniProtKB"/>
</dbReference>
<dbReference type="GO" id="GO:0003723">
    <property type="term" value="F:RNA binding"/>
    <property type="evidence" value="ECO:0007005"/>
    <property type="project" value="UniProtKB"/>
</dbReference>
<dbReference type="GO" id="GO:0006406">
    <property type="term" value="P:mRNA export from nucleus"/>
    <property type="evidence" value="ECO:0000303"/>
    <property type="project" value="ComplexPortal"/>
</dbReference>
<dbReference type="GO" id="GO:0000398">
    <property type="term" value="P:mRNA splicing, via spliceosome"/>
    <property type="evidence" value="ECO:0000314"/>
    <property type="project" value="UniProtKB"/>
</dbReference>
<dbReference type="GO" id="GO:0000184">
    <property type="term" value="P:nuclear-transcribed mRNA catabolic process, nonsense-mediated decay"/>
    <property type="evidence" value="ECO:0000316"/>
    <property type="project" value="HGNC"/>
</dbReference>
<dbReference type="GO" id="GO:0050684">
    <property type="term" value="P:regulation of mRNA processing"/>
    <property type="evidence" value="ECO:0000250"/>
    <property type="project" value="ComplexPortal"/>
</dbReference>
<dbReference type="GO" id="GO:2000622">
    <property type="term" value="P:regulation of nuclear-transcribed mRNA catabolic process, nonsense-mediated decay"/>
    <property type="evidence" value="ECO:0000250"/>
    <property type="project" value="ComplexPortal"/>
</dbReference>
<dbReference type="GO" id="GO:0008380">
    <property type="term" value="P:RNA splicing"/>
    <property type="evidence" value="ECO:0000318"/>
    <property type="project" value="GO_Central"/>
</dbReference>
<dbReference type="CDD" id="cd11295">
    <property type="entry name" value="Mago_nashi"/>
    <property type="match status" value="1"/>
</dbReference>
<dbReference type="FunFam" id="3.30.1560.10:FF:000001">
    <property type="entry name" value="Protein mago nashi homolog"/>
    <property type="match status" value="1"/>
</dbReference>
<dbReference type="Gene3D" id="3.30.1560.10">
    <property type="entry name" value="Mago nashi"/>
    <property type="match status" value="1"/>
</dbReference>
<dbReference type="InterPro" id="IPR004023">
    <property type="entry name" value="Mago_nashi"/>
</dbReference>
<dbReference type="InterPro" id="IPR036605">
    <property type="entry name" value="Mago_nashi_sf"/>
</dbReference>
<dbReference type="PANTHER" id="PTHR12638:SF0">
    <property type="entry name" value="MAGO HOMOLOG, EXON JUNCTION COMPLEX SUBUNIT-RELATED"/>
    <property type="match status" value="1"/>
</dbReference>
<dbReference type="PANTHER" id="PTHR12638">
    <property type="entry name" value="PROTEIN MAGO NASHI HOMOLOG"/>
    <property type="match status" value="1"/>
</dbReference>
<dbReference type="Pfam" id="PF02792">
    <property type="entry name" value="Mago_nashi"/>
    <property type="match status" value="1"/>
</dbReference>
<dbReference type="SUPFAM" id="SSF89817">
    <property type="entry name" value="Mago nashi protein"/>
    <property type="match status" value="1"/>
</dbReference>
<feature type="initiator methionine" description="Removed" evidence="6 11 12 13">
    <location>
        <position position="1"/>
    </location>
</feature>
<feature type="chain" id="PRO_0000174146" description="Protein mago nashi homolog 2">
    <location>
        <begin position="2"/>
        <end position="148"/>
    </location>
</feature>
<feature type="modified residue" description="N-acetylalanine" evidence="6 11 12 13">
    <location>
        <position position="2"/>
    </location>
</feature>
<feature type="sequence variant" id="VAR_036431" description="In a breast cancer sample; somatic mutation." evidence="1">
    <original>E</original>
    <variation>K</variation>
    <location>
        <position position="119"/>
    </location>
</feature>
<feature type="strand" evidence="14">
    <location>
        <begin position="7"/>
        <end position="17"/>
    </location>
</feature>
<feature type="strand" evidence="14">
    <location>
        <begin position="20"/>
        <end position="28"/>
    </location>
</feature>
<feature type="strand" evidence="14">
    <location>
        <begin position="32"/>
        <end position="39"/>
    </location>
</feature>
<feature type="helix" evidence="14">
    <location>
        <begin position="42"/>
        <end position="44"/>
    </location>
</feature>
<feature type="strand" evidence="14">
    <location>
        <begin position="48"/>
        <end position="54"/>
    </location>
</feature>
<feature type="helix" evidence="14">
    <location>
        <begin position="56"/>
        <end position="69"/>
    </location>
</feature>
<feature type="helix" evidence="14">
    <location>
        <begin position="71"/>
        <end position="73"/>
    </location>
</feature>
<feature type="strand" evidence="14">
    <location>
        <begin position="87"/>
        <end position="94"/>
    </location>
</feature>
<feature type="strand" evidence="14">
    <location>
        <begin position="97"/>
        <end position="103"/>
    </location>
</feature>
<feature type="helix" evidence="14">
    <location>
        <begin position="109"/>
        <end position="114"/>
    </location>
</feature>
<feature type="strand" evidence="14">
    <location>
        <begin position="115"/>
        <end position="117"/>
    </location>
</feature>
<feature type="helix" evidence="14">
    <location>
        <begin position="118"/>
        <end position="143"/>
    </location>
</feature>